<protein>
    <recommendedName>
        <fullName>Ribonuclease pancreatic</fullName>
        <ecNumber>4.6.1.18</ecNumber>
    </recommendedName>
    <alternativeName>
        <fullName>RNase 1</fullName>
    </alternativeName>
    <alternativeName>
        <fullName>RNase A</fullName>
    </alternativeName>
</protein>
<reference key="1">
    <citation type="journal article" date="1973" name="J. Biol. Chem.">
        <title>The amino acid sequence of ovine pancreatic ribonuclease A.</title>
        <authorList>
            <person name="Kobayashi R."/>
            <person name="Hirs C.H.W."/>
        </authorList>
    </citation>
    <scope>PROTEIN SEQUENCE</scope>
</reference>
<reference key="2">
    <citation type="journal article" date="1974" name="FEBS Lett.">
        <title>The primary structure of goat and sheep pancreatic ribonucleases.</title>
        <authorList>
            <person name="Welling G.W."/>
            <person name="Scheffer A.J."/>
            <person name="Beintema J.J."/>
        </authorList>
    </citation>
    <scope>PROTEIN SEQUENCE</scope>
    <source>
        <tissue>Pancreas</tissue>
    </source>
</reference>
<reference key="3">
    <citation type="journal article" date="1995" name="J. Mol. Evol.">
        <title>Molecular evolution of genes encoding ribonucleases in ruminant species.</title>
        <authorList>
            <person name="Confalone E."/>
            <person name="Beintema J.J."/>
            <person name="Sasso M.P."/>
            <person name="Carsana A."/>
            <person name="Palmieri M."/>
            <person name="Vento M.T."/>
            <person name="Furia A."/>
        </authorList>
    </citation>
    <scope>NUCLEOTIDE SEQUENCE [GENOMIC DNA]</scope>
</reference>
<evidence type="ECO:0000250" key="1"/>
<evidence type="ECO:0000256" key="2">
    <source>
        <dbReference type="SAM" id="MobiDB-lite"/>
    </source>
</evidence>
<evidence type="ECO:0000305" key="3"/>
<comment type="function">
    <text evidence="1">Endonuclease that catalyzes the cleavage of RNA on the 3' side of pyrimidine nucleotides. Acts on single-stranded and double-stranded RNA (By similarity).</text>
</comment>
<comment type="catalytic activity">
    <reaction>
        <text>an [RNA] containing cytidine + H2O = an [RNA]-3'-cytidine-3'-phosphate + a 5'-hydroxy-ribonucleotide-3'-[RNA].</text>
        <dbReference type="EC" id="4.6.1.18"/>
    </reaction>
</comment>
<comment type="catalytic activity">
    <reaction>
        <text>an [RNA] containing uridine + H2O = an [RNA]-3'-uridine-3'-phosphate + a 5'-hydroxy-ribonucleotide-3'-[RNA].</text>
        <dbReference type="EC" id="4.6.1.18"/>
    </reaction>
</comment>
<comment type="subunit">
    <text evidence="1">Monomer. Interacts with and forms tight 1:1 complexes with RNH1. Dimerization of two such complexes may occur. Interaction with RNH1 inhibits this protein (By similarity).</text>
</comment>
<comment type="subcellular location">
    <subcellularLocation>
        <location>Secreted</location>
    </subcellularLocation>
</comment>
<comment type="tissue specificity">
    <text>Pancreas.</text>
</comment>
<comment type="similarity">
    <text evidence="3">Belongs to the pancreatic ribonuclease family.</text>
</comment>
<name>RNAS1_SHEEP</name>
<dbReference type="EC" id="4.6.1.18"/>
<dbReference type="EMBL" id="S81741">
    <property type="protein sequence ID" value="AAB36135.1"/>
    <property type="molecule type" value="Genomic_DNA"/>
</dbReference>
<dbReference type="PIR" id="A91406">
    <property type="entry name" value="NRSH"/>
</dbReference>
<dbReference type="SMR" id="P67927"/>
<dbReference type="STRING" id="9940.ENSOARP00000013570"/>
<dbReference type="GlyCosmos" id="P67927">
    <property type="glycosylation" value="1 site, No reported glycans"/>
</dbReference>
<dbReference type="PaxDb" id="9940-ENSOARP00000013570"/>
<dbReference type="eggNOG" id="ENOG502SQ4K">
    <property type="taxonomic scope" value="Eukaryota"/>
</dbReference>
<dbReference type="BRENDA" id="4.6.1.18">
    <property type="organism ID" value="2668"/>
</dbReference>
<dbReference type="Proteomes" id="UP000002356">
    <property type="component" value="Unplaced"/>
</dbReference>
<dbReference type="GO" id="GO:0005576">
    <property type="term" value="C:extracellular region"/>
    <property type="evidence" value="ECO:0007669"/>
    <property type="project" value="UniProtKB-SubCell"/>
</dbReference>
<dbReference type="GO" id="GO:0016829">
    <property type="term" value="F:lyase activity"/>
    <property type="evidence" value="ECO:0007669"/>
    <property type="project" value="UniProtKB-KW"/>
</dbReference>
<dbReference type="GO" id="GO:0003676">
    <property type="term" value="F:nucleic acid binding"/>
    <property type="evidence" value="ECO:0007669"/>
    <property type="project" value="InterPro"/>
</dbReference>
<dbReference type="GO" id="GO:0004522">
    <property type="term" value="F:ribonuclease A activity"/>
    <property type="evidence" value="ECO:0007669"/>
    <property type="project" value="UniProtKB-EC"/>
</dbReference>
<dbReference type="GO" id="GO:0050830">
    <property type="term" value="P:defense response to Gram-positive bacterium"/>
    <property type="evidence" value="ECO:0007669"/>
    <property type="project" value="TreeGrafter"/>
</dbReference>
<dbReference type="CDD" id="cd06265">
    <property type="entry name" value="RNase_A_canonical"/>
    <property type="match status" value="1"/>
</dbReference>
<dbReference type="FunFam" id="3.10.130.10:FF:000001">
    <property type="entry name" value="Ribonuclease pancreatic"/>
    <property type="match status" value="1"/>
</dbReference>
<dbReference type="Gene3D" id="3.10.130.10">
    <property type="entry name" value="Ribonuclease A-like domain"/>
    <property type="match status" value="1"/>
</dbReference>
<dbReference type="InterPro" id="IPR001427">
    <property type="entry name" value="RNaseA"/>
</dbReference>
<dbReference type="InterPro" id="IPR036816">
    <property type="entry name" value="RNaseA-like_dom_sf"/>
</dbReference>
<dbReference type="InterPro" id="IPR023411">
    <property type="entry name" value="RNaseA_AS"/>
</dbReference>
<dbReference type="InterPro" id="IPR023412">
    <property type="entry name" value="RNaseA_domain"/>
</dbReference>
<dbReference type="PANTHER" id="PTHR11437">
    <property type="entry name" value="RIBONUCLEASE"/>
    <property type="match status" value="1"/>
</dbReference>
<dbReference type="PANTHER" id="PTHR11437:SF24">
    <property type="entry name" value="RIBONUCLEASE PANCREATIC"/>
    <property type="match status" value="1"/>
</dbReference>
<dbReference type="Pfam" id="PF00074">
    <property type="entry name" value="RnaseA"/>
    <property type="match status" value="1"/>
</dbReference>
<dbReference type="PRINTS" id="PR00794">
    <property type="entry name" value="RIBONUCLEASE"/>
</dbReference>
<dbReference type="SMART" id="SM00092">
    <property type="entry name" value="RNAse_Pc"/>
    <property type="match status" value="1"/>
</dbReference>
<dbReference type="SUPFAM" id="SSF54076">
    <property type="entry name" value="RNase A-like"/>
    <property type="match status" value="1"/>
</dbReference>
<dbReference type="PROSITE" id="PS00127">
    <property type="entry name" value="RNASE_PANCREATIC"/>
    <property type="match status" value="1"/>
</dbReference>
<feature type="chain" id="PRO_0000057214" description="Ribonuclease pancreatic">
    <location>
        <begin position="1"/>
        <end position="124"/>
    </location>
</feature>
<feature type="region of interest" description="Disordered" evidence="2">
    <location>
        <begin position="1"/>
        <end position="24"/>
    </location>
</feature>
<feature type="compositionally biased region" description="Basic and acidic residues" evidence="2">
    <location>
        <begin position="1"/>
        <end position="13"/>
    </location>
</feature>
<feature type="active site" description="Proton acceptor">
    <location>
        <position position="12"/>
    </location>
</feature>
<feature type="active site" description="Proton donor">
    <location>
        <position position="119"/>
    </location>
</feature>
<feature type="binding site">
    <location>
        <position position="7"/>
    </location>
    <ligand>
        <name>substrate</name>
    </ligand>
</feature>
<feature type="binding site">
    <location>
        <position position="10"/>
    </location>
    <ligand>
        <name>substrate</name>
    </ligand>
</feature>
<feature type="binding site">
    <location>
        <begin position="41"/>
        <end position="45"/>
    </location>
    <ligand>
        <name>substrate</name>
    </ligand>
</feature>
<feature type="binding site">
    <location>
        <position position="66"/>
    </location>
    <ligand>
        <name>substrate</name>
    </ligand>
</feature>
<feature type="binding site">
    <location>
        <position position="85"/>
    </location>
    <ligand>
        <name>substrate</name>
    </ligand>
</feature>
<feature type="glycosylation site" description="N-linked (GlcNAc...) asparagine; partial">
    <location>
        <position position="34"/>
    </location>
</feature>
<feature type="disulfide bond">
    <location>
        <begin position="26"/>
        <end position="84"/>
    </location>
</feature>
<feature type="disulfide bond">
    <location>
        <begin position="40"/>
        <end position="95"/>
    </location>
</feature>
<feature type="disulfide bond">
    <location>
        <begin position="58"/>
        <end position="110"/>
    </location>
</feature>
<feature type="disulfide bond">
    <location>
        <begin position="65"/>
        <end position="72"/>
    </location>
</feature>
<feature type="sequence conflict" description="In Ref. 1; AA sequence." evidence="3" ref="1">
    <original>E</original>
    <variation>Q</variation>
    <location>
        <position position="49"/>
    </location>
</feature>
<feature type="sequence conflict" description="In Ref. 1; AA sequence." evidence="3" ref="1">
    <original>E</original>
    <variation>Q</variation>
    <location>
        <position position="103"/>
    </location>
</feature>
<accession>P67927</accession>
<accession>P00661</accession>
<accession>P04420</accession>
<gene>
    <name type="primary">RNASE1</name>
    <name type="synonym">RNS1</name>
</gene>
<sequence>KESAAAKFERQHMDSSTSSASSSNYCNQMMKSRNLTQDRCKPVNTFVHESLADVQAVCSQKNVACKNGQTNCYQSYSTMSITDCRETGSSKYPNCAYKTTQAEKHIIVACEGNPYVPVHFDASV</sequence>
<organism>
    <name type="scientific">Ovis aries</name>
    <name type="common">Sheep</name>
    <dbReference type="NCBI Taxonomy" id="9940"/>
    <lineage>
        <taxon>Eukaryota</taxon>
        <taxon>Metazoa</taxon>
        <taxon>Chordata</taxon>
        <taxon>Craniata</taxon>
        <taxon>Vertebrata</taxon>
        <taxon>Euteleostomi</taxon>
        <taxon>Mammalia</taxon>
        <taxon>Eutheria</taxon>
        <taxon>Laurasiatheria</taxon>
        <taxon>Artiodactyla</taxon>
        <taxon>Ruminantia</taxon>
        <taxon>Pecora</taxon>
        <taxon>Bovidae</taxon>
        <taxon>Caprinae</taxon>
        <taxon>Ovis</taxon>
    </lineage>
</organism>
<keyword id="KW-0903">Direct protein sequencing</keyword>
<keyword id="KW-1015">Disulfide bond</keyword>
<keyword id="KW-0255">Endonuclease</keyword>
<keyword id="KW-0325">Glycoprotein</keyword>
<keyword id="KW-0378">Hydrolase</keyword>
<keyword id="KW-0456">Lyase</keyword>
<keyword id="KW-0540">Nuclease</keyword>
<keyword id="KW-1185">Reference proteome</keyword>
<keyword id="KW-0964">Secreted</keyword>
<proteinExistence type="evidence at protein level"/>